<feature type="chain" id="PRO_0000405382" description="Uncharacterized protein F1">
    <location>
        <begin position="1"/>
        <end position="135"/>
    </location>
</feature>
<feature type="region of interest" description="Disordered" evidence="1">
    <location>
        <begin position="100"/>
        <end position="125"/>
    </location>
</feature>
<feature type="compositionally biased region" description="Low complexity" evidence="1">
    <location>
        <begin position="106"/>
        <end position="115"/>
    </location>
</feature>
<keyword id="KW-1185">Reference proteome</keyword>
<protein>
    <recommendedName>
        <fullName>Uncharacterized protein F1</fullName>
    </recommendedName>
</protein>
<gene>
    <name type="primary">F1</name>
</gene>
<reference key="1">
    <citation type="journal article" date="2006" name="Virology">
        <title>Polydnavirus genomes reflect their dual roles as mutualists and pathogens.</title>
        <authorList>
            <person name="Webb B.A."/>
            <person name="Strand M.R."/>
            <person name="Dickey S.E."/>
            <person name="Beck M.H."/>
            <person name="Hilgarth R.S."/>
            <person name="Barney W.E."/>
            <person name="Kadash K."/>
            <person name="Kroemer J.A."/>
            <person name="Lindstrom K.G."/>
            <person name="Rattanadechakul W."/>
            <person name="Shelby K.S."/>
            <person name="Thoetkiattikul H."/>
            <person name="Turnbull M.W."/>
            <person name="Witherell R.A."/>
        </authorList>
    </citation>
    <scope>NUCLEOTIDE SEQUENCE [GENOMIC DNA]</scope>
</reference>
<evidence type="ECO:0000256" key="1">
    <source>
        <dbReference type="SAM" id="MobiDB-lite"/>
    </source>
</evidence>
<accession>Q5I157</accession>
<organismHost>
    <name type="scientific">Microplitis demolitor</name>
    <name type="common">Parasitoid wasp</name>
    <dbReference type="NCBI Taxonomy" id="69319"/>
</organismHost>
<organism>
    <name type="scientific">Microplitis demolitor bracovirus (isolate Webb)</name>
    <name type="common">MdBV</name>
    <dbReference type="NCBI Taxonomy" id="654919"/>
    <lineage>
        <taxon>Viruses</taxon>
        <taxon>Viruses incertae sedis</taxon>
        <taxon>Polydnaviriformidae</taxon>
        <taxon>Bracoviriform</taxon>
        <taxon>Microplitis demolitor bracovirus</taxon>
    </lineage>
</organism>
<proteinExistence type="predicted"/>
<dbReference type="EMBL" id="AY875682">
    <property type="protein sequence ID" value="AAW51777.1"/>
    <property type="molecule type" value="Genomic_DNA"/>
</dbReference>
<dbReference type="RefSeq" id="YP_239371.1">
    <property type="nucleotide sequence ID" value="NC_007032.1"/>
</dbReference>
<dbReference type="KEGG" id="vg:5075807"/>
<dbReference type="Proteomes" id="UP000008168">
    <property type="component" value="Genome"/>
</dbReference>
<name>YF1_MDBVW</name>
<sequence length="135" mass="15091">MAISTNKLFISGSRVSIMSLELIVPNEWNVIPRRTLETELLRIISAKQSVDQTTSGVIGFYNGIVAESRKLSGYLWFRKIGDHSKKPYVNWYQVMTIKPKESPATSSEDISSCSDCDSERLQSDDGCCSTCGEEE</sequence>